<gene>
    <name type="primary">LIP2</name>
</gene>
<comment type="function">
    <text>Hydrolyzes all ester bonds in triglyceride and displays a high affinity for triolein. For unsaturated substrates having long fatty acyl chains (C18:2 cis-9, cis-12 and C18:3 cis-9, cis-12, cis-15) GCL I shows higher specific activity than GCL II, whereas GCL II shows higher specific activity against saturated substrates having short fatty acid chains (C8, C10, C12 and C14).</text>
</comment>
<comment type="catalytic activity">
    <reaction>
        <text>a triacylglycerol + H2O = a diacylglycerol + a fatty acid + H(+)</text>
        <dbReference type="Rhea" id="RHEA:12044"/>
        <dbReference type="ChEBI" id="CHEBI:15377"/>
        <dbReference type="ChEBI" id="CHEBI:15378"/>
        <dbReference type="ChEBI" id="CHEBI:17855"/>
        <dbReference type="ChEBI" id="CHEBI:18035"/>
        <dbReference type="ChEBI" id="CHEBI:28868"/>
        <dbReference type="EC" id="3.1.1.3"/>
    </reaction>
</comment>
<comment type="subunit">
    <text>Monomer.</text>
</comment>
<comment type="subcellular location">
    <subcellularLocation>
        <location>Secreted</location>
    </subcellularLocation>
</comment>
<comment type="similarity">
    <text evidence="3">Belongs to the type-B carboxylesterase/lipase family.</text>
</comment>
<proteinExistence type="evidence at protein level"/>
<organism>
    <name type="scientific">Geotrichum candidum</name>
    <name type="common">Oospora lactis</name>
    <name type="synonym">Dipodascus geotrichum</name>
    <dbReference type="NCBI Taxonomy" id="1173061"/>
    <lineage>
        <taxon>Eukaryota</taxon>
        <taxon>Fungi</taxon>
        <taxon>Dikarya</taxon>
        <taxon>Ascomycota</taxon>
        <taxon>Saccharomycotina</taxon>
        <taxon>Dipodascomycetes</taxon>
        <taxon>Dipodascales</taxon>
        <taxon>Dipodascaceae</taxon>
        <taxon>Geotrichum</taxon>
    </lineage>
</organism>
<reference key="1">
    <citation type="journal article" date="1993" name="J. Biochem.">
        <title>Cloning and sequencing of two chromosomal lipase genes from Geotrichum candidum.</title>
        <authorList>
            <person name="Nagao T."/>
            <person name="Shimada Y."/>
            <person name="Sugihara A."/>
            <person name="Tominaga Y."/>
        </authorList>
    </citation>
    <scope>NUCLEOTIDE SEQUENCE [GENOMIC DNA] OF 1-30 AND 551-563</scope>
    <source>
        <strain>ATCC 34614</strain>
    </source>
</reference>
<reference key="2">
    <citation type="journal article" date="1990" name="J. Biochem.">
        <title>cDNA cloning and characterization of Geotrichum candidum lipase II.</title>
        <authorList>
            <person name="Shimada Y."/>
            <person name="Sugihara A."/>
            <person name="Iizumi T."/>
            <person name="Tominaga Y."/>
        </authorList>
    </citation>
    <scope>NUCLEOTIDE SEQUENCE [MRNA] OF 7-563</scope>
    <scope>PARTIAL PROTEIN SEQUENCE</scope>
</reference>
<reference key="3">
    <citation type="journal article" date="1994" name="Eur. J. Biochem.">
        <title>Polymorphism in the lipase genes of Geotrichum candidum strains.</title>
        <authorList>
            <person name="Bertolini M.C."/>
            <person name="Laramee L."/>
            <person name="Thomas D.Y."/>
            <person name="Cygler M."/>
            <person name="Schrag J.D."/>
            <person name="Vernet T."/>
        </authorList>
    </citation>
    <scope>NUCLEOTIDE SEQUENCE [GENOMIC DNA] OF 20-563</scope>
    <source>
        <strain>ATCC 34614</strain>
        <strain>ATCC 74169 / NRRL Y-552 / ED00652</strain>
        <strain>ATCC 90287 / NRRL Y-553</strain>
    </source>
</reference>
<reference key="4">
    <citation type="journal article" date="1990" name="J. Biochem.">
        <title>Separation and characterization of two molecular forms of Geotrichum candidum lipase.</title>
        <authorList>
            <person name="Sugihara A."/>
            <person name="Shimada Y."/>
            <person name="Tominaga Y."/>
        </authorList>
    </citation>
    <scope>PROTEIN SEQUENCE OF 20-26 AND 561-563</scope>
    <scope>PYROGLUTAMATE FORMATION AT GLN-20</scope>
</reference>
<reference key="5">
    <citation type="journal article" date="1995" name="Eur. J. Biochem.">
        <title>Expression and characterization of Geotrichum candidum lipase I gene. Comparison of specificity profile with lipase II.</title>
        <authorList>
            <person name="Bertolini M.C."/>
            <person name="Schrag J.D."/>
            <person name="Cygler M."/>
            <person name="Ziomek E."/>
            <person name="Thomas D.Y."/>
            <person name="Vernet T."/>
        </authorList>
    </citation>
    <scope>CHARACTERIZATION</scope>
</reference>
<reference key="6">
    <citation type="journal article" date="1991" name="Nature">
        <title>Ser-His-Glu triad forms the catalytic site of the lipase from Geotrichum candidum.</title>
        <authorList>
            <person name="Schrag J.D."/>
            <person name="Li Y."/>
            <person name="Wu S."/>
            <person name="Cygler M."/>
        </authorList>
    </citation>
    <scope>X-RAY CRYSTALLOGRAPHY (2.2 ANGSTROMS)</scope>
</reference>
<reference key="7">
    <citation type="journal article" date="1993" name="J. Mol. Biol.">
        <title>1.8 A refined structure of the lipase from Geotrichum candidum.</title>
        <authorList>
            <person name="Schrag J.D."/>
            <person name="Cygler M."/>
        </authorList>
    </citation>
    <scope>X-RAY CRYSTALLOGRAPHY (1.8 ANGSTROMS)</scope>
</reference>
<protein>
    <recommendedName>
        <fullName>Lipase 2</fullName>
        <ecNumber>3.1.1.3</ecNumber>
    </recommendedName>
    <alternativeName>
        <fullName>GCL II</fullName>
    </alternativeName>
    <alternativeName>
        <fullName>Lipase II</fullName>
    </alternativeName>
</protein>
<accession>P22394</accession>
<accession>Q00885</accession>
<accession>Q00890</accession>
<accession>Q00892</accession>
<accession>Q02213</accession>
<accession>Q96VH7</accession>
<name>LIP2_GEOCN</name>
<evidence type="ECO:0000255" key="1"/>
<evidence type="ECO:0000269" key="2">
    <source>
    </source>
</evidence>
<evidence type="ECO:0000305" key="3"/>
<evidence type="ECO:0007829" key="4">
    <source>
        <dbReference type="PDB" id="1THG"/>
    </source>
</evidence>
<dbReference type="EC" id="3.1.1.3"/>
<dbReference type="EMBL" id="AH004358">
    <property type="protein sequence ID" value="AAB28108.1"/>
    <property type="molecule type" value="Genomic_DNA"/>
</dbReference>
<dbReference type="EMBL" id="AH004358">
    <property type="protein sequence ID" value="AAB28109.1"/>
    <property type="molecule type" value="Genomic_DNA"/>
</dbReference>
<dbReference type="EMBL" id="D00697">
    <property type="protein sequence ID" value="BAA00603.1"/>
    <property type="molecule type" value="mRNA"/>
</dbReference>
<dbReference type="EMBL" id="U02541">
    <property type="protein sequence ID" value="AAA03430.1"/>
    <property type="molecule type" value="Genomic_DNA"/>
</dbReference>
<dbReference type="EMBL" id="U02623">
    <property type="protein sequence ID" value="AAA03436.1"/>
    <property type="molecule type" value="Genomic_DNA"/>
</dbReference>
<dbReference type="EMBL" id="U02625">
    <property type="protein sequence ID" value="AAA03437.1"/>
    <property type="molecule type" value="Genomic_DNA"/>
</dbReference>
<dbReference type="PIR" id="PN0493">
    <property type="entry name" value="PN0493"/>
</dbReference>
<dbReference type="PIR" id="PX0030">
    <property type="entry name" value="PX0030"/>
</dbReference>
<dbReference type="PIR" id="S41094">
    <property type="entry name" value="S41094"/>
</dbReference>
<dbReference type="PIR" id="S41095">
    <property type="entry name" value="S41095"/>
</dbReference>
<dbReference type="PIR" id="S41096">
    <property type="entry name" value="S41096"/>
</dbReference>
<dbReference type="PDB" id="1THG">
    <property type="method" value="X-ray"/>
    <property type="resolution" value="1.80 A"/>
    <property type="chains" value="A=26-563"/>
</dbReference>
<dbReference type="PDBsum" id="1THG"/>
<dbReference type="SMR" id="P22394"/>
<dbReference type="ESTHER" id="geoca-2lipa">
    <property type="family name" value="Fungal_carboxylesterase_lipase"/>
</dbReference>
<dbReference type="GlyCosmos" id="P22394">
    <property type="glycosylation" value="2 sites, No reported glycans"/>
</dbReference>
<dbReference type="EvolutionaryTrace" id="P22394"/>
<dbReference type="GO" id="GO:0005576">
    <property type="term" value="C:extracellular region"/>
    <property type="evidence" value="ECO:0007669"/>
    <property type="project" value="UniProtKB-SubCell"/>
</dbReference>
<dbReference type="GO" id="GO:0004806">
    <property type="term" value="F:triacylglycerol lipase activity"/>
    <property type="evidence" value="ECO:0007669"/>
    <property type="project" value="UniProtKB-EC"/>
</dbReference>
<dbReference type="GO" id="GO:0016042">
    <property type="term" value="P:lipid catabolic process"/>
    <property type="evidence" value="ECO:0007669"/>
    <property type="project" value="UniProtKB-KW"/>
</dbReference>
<dbReference type="CDD" id="cd00312">
    <property type="entry name" value="Esterase_lipase"/>
    <property type="match status" value="1"/>
</dbReference>
<dbReference type="Gene3D" id="3.40.50.1820">
    <property type="entry name" value="alpha/beta hydrolase"/>
    <property type="match status" value="1"/>
</dbReference>
<dbReference type="InterPro" id="IPR029058">
    <property type="entry name" value="AB_hydrolase_fold"/>
</dbReference>
<dbReference type="InterPro" id="IPR002018">
    <property type="entry name" value="CarbesteraseB"/>
</dbReference>
<dbReference type="InterPro" id="IPR019826">
    <property type="entry name" value="Carboxylesterase_B_AS"/>
</dbReference>
<dbReference type="InterPro" id="IPR019819">
    <property type="entry name" value="Carboxylesterase_B_CS"/>
</dbReference>
<dbReference type="InterPro" id="IPR050309">
    <property type="entry name" value="Type-B_Carboxylest/Lipase"/>
</dbReference>
<dbReference type="PANTHER" id="PTHR11559">
    <property type="entry name" value="CARBOXYLESTERASE"/>
    <property type="match status" value="1"/>
</dbReference>
<dbReference type="Pfam" id="PF00135">
    <property type="entry name" value="COesterase"/>
    <property type="match status" value="1"/>
</dbReference>
<dbReference type="SUPFAM" id="SSF53474">
    <property type="entry name" value="alpha/beta-Hydrolases"/>
    <property type="match status" value="1"/>
</dbReference>
<dbReference type="PROSITE" id="PS00122">
    <property type="entry name" value="CARBOXYLESTERASE_B_1"/>
    <property type="match status" value="1"/>
</dbReference>
<dbReference type="PROSITE" id="PS00941">
    <property type="entry name" value="CARBOXYLESTERASE_B_2"/>
    <property type="match status" value="1"/>
</dbReference>
<sequence length="563" mass="61617">MVSKSLFLAAAVNLAGVLAQAPRPSLNGNEVISGVLEGKVDTFKGIPFADPPLNDLRFKHPQPFTGSYQGLKANDFSPACMQLDPGNSLTLLDKALGLAKVIPEEFRGPLYDMAKGTVSMNEDCLYLNVFRPAGTKPDAKLPVMVWIYGGAFVYGSSAAYPGNSYVKESINMGQPVVFVSINYRTGPFGFLGGDAITAEGNTNAGLHDQRKGLEWVSDNIANFGGDPDKVMIFGESAGAMSVAHQLIAYGGDNTYNGKKLFHSAILQSGGPLPYHDSSSVGPDISYNRFAQYAGCDTSASANDTLECLRSKSSSVLHDAQNSYDLKDLFGLLPQFLGFGPRPDGNIIPDAAYELFRSGRYAKVPYISGNQEDEGTAFAPVALNATTTPHVKKWLQYIFYDASEASIDRVLSLYPQTLSVGSPFRTGILNALTPQFKRVAAILSDMLFQSPRRVMLSATKDVNRWTYLSTHLHNLVPFLGTFHGNELIFQFNVNIGPANSYLRYFISFANHHDPNVGTNLLQWDQYTDEGKEMLEIHMTDNVMRTDDYRIEGISNFETDVNLYG</sequence>
<feature type="signal peptide" evidence="2">
    <location>
        <begin position="1"/>
        <end position="19"/>
    </location>
</feature>
<feature type="chain" id="PRO_0000008625" description="Lipase 2">
    <location>
        <begin position="20"/>
        <end position="563"/>
    </location>
</feature>
<feature type="active site" description="Acyl-ester intermediate">
    <location>
        <position position="236"/>
    </location>
</feature>
<feature type="active site" description="Charge relay system">
    <location>
        <position position="373"/>
    </location>
</feature>
<feature type="active site" description="Charge relay system">
    <location>
        <position position="482"/>
    </location>
</feature>
<feature type="modified residue" description="Pyrrolidone carboxylic acid" evidence="2">
    <location>
        <position position="20"/>
    </location>
</feature>
<feature type="glycosylation site" description="N-linked (GlcNAc...) asparagine" evidence="1">
    <location>
        <position position="302"/>
    </location>
</feature>
<feature type="glycosylation site" description="N-linked (GlcNAc...) asparagine" evidence="1">
    <location>
        <position position="383"/>
    </location>
</feature>
<feature type="disulfide bond">
    <location>
        <begin position="80"/>
        <end position="124"/>
    </location>
</feature>
<feature type="disulfide bond">
    <location>
        <begin position="295"/>
        <end position="307"/>
    </location>
</feature>
<feature type="sequence variant" description="In strain: NRRL Y-552.">
    <original>I</original>
    <variation>V</variation>
    <location>
        <position position="46"/>
    </location>
</feature>
<feature type="sequence variant" description="In strain: NRRL Y-553.">
    <original>I</original>
    <variation>V</variation>
    <location>
        <position position="247"/>
    </location>
</feature>
<feature type="sequence variant" description="In strain: NRRL Y-553.">
    <original>F</original>
    <variation>Y</variation>
    <location>
        <position position="355"/>
    </location>
</feature>
<feature type="sequence variant" description="In strain: NRRL Y-553.">
    <original>K</original>
    <variation>R</variation>
    <location>
        <position position="391"/>
    </location>
</feature>
<feature type="sequence variant" description="In strain: NRRL Y-553.">
    <original>A</original>
    <variation>S</variation>
    <location>
        <position position="439"/>
    </location>
</feature>
<feature type="sequence variant" description="In strain: NRRL Y-552.">
    <original>N</original>
    <variation>D</variation>
    <location>
        <position position="484"/>
    </location>
</feature>
<feature type="sequence conflict" description="In Ref. 3; AAA03430/AAA03436." evidence="3" ref="3">
    <original>RPS</original>
    <variation>TAV</variation>
    <location>
        <begin position="23"/>
        <end position="25"/>
    </location>
</feature>
<feature type="sequence conflict" description="In Ref. 3; AAA03430/AAA03437." evidence="3" ref="3">
    <original>L</original>
    <variation>V</variation>
    <location>
        <position position="36"/>
    </location>
</feature>
<feature type="sequence conflict" description="In Ref. 3; AAA03430." evidence="3" ref="3">
    <original>DA</original>
    <variation>ED</variation>
    <location>
        <begin position="138"/>
        <end position="139"/>
    </location>
</feature>
<feature type="strand" evidence="4">
    <location>
        <begin position="23"/>
        <end position="26"/>
    </location>
</feature>
<feature type="turn" evidence="4">
    <location>
        <begin position="27"/>
        <end position="29"/>
    </location>
</feature>
<feature type="strand" evidence="4">
    <location>
        <begin position="30"/>
        <end position="33"/>
    </location>
</feature>
<feature type="strand" evidence="4">
    <location>
        <begin position="35"/>
        <end position="37"/>
    </location>
</feature>
<feature type="strand" evidence="4">
    <location>
        <begin position="40"/>
        <end position="47"/>
    </location>
</feature>
<feature type="helix" evidence="4">
    <location>
        <begin position="54"/>
        <end position="56"/>
    </location>
</feature>
<feature type="helix" evidence="4">
    <location>
        <begin position="85"/>
        <end position="96"/>
    </location>
</feature>
<feature type="helix" evidence="4">
    <location>
        <begin position="98"/>
        <end position="101"/>
    </location>
</feature>
<feature type="helix" evidence="4">
    <location>
        <begin position="104"/>
        <end position="113"/>
    </location>
</feature>
<feature type="strand" evidence="4">
    <location>
        <begin position="126"/>
        <end position="132"/>
    </location>
</feature>
<feature type="strand" evidence="4">
    <location>
        <begin position="141"/>
        <end position="147"/>
    </location>
</feature>
<feature type="helix" evidence="4">
    <location>
        <begin position="156"/>
        <end position="159"/>
    </location>
</feature>
<feature type="helix" evidence="4">
    <location>
        <begin position="163"/>
        <end position="171"/>
    </location>
</feature>
<feature type="strand" evidence="4">
    <location>
        <begin position="177"/>
        <end position="181"/>
    </location>
</feature>
<feature type="helix" evidence="4">
    <location>
        <begin position="186"/>
        <end position="190"/>
    </location>
</feature>
<feature type="helix" evidence="4">
    <location>
        <begin position="194"/>
        <end position="199"/>
    </location>
</feature>
<feature type="helix" evidence="4">
    <location>
        <begin position="204"/>
        <end position="219"/>
    </location>
</feature>
<feature type="helix" evidence="4">
    <location>
        <begin position="220"/>
        <end position="223"/>
    </location>
</feature>
<feature type="strand" evidence="4">
    <location>
        <begin position="225"/>
        <end position="235"/>
    </location>
</feature>
<feature type="helix" evidence="4">
    <location>
        <begin position="237"/>
        <end position="247"/>
    </location>
</feature>
<feature type="helix" evidence="4">
    <location>
        <begin position="248"/>
        <end position="250"/>
    </location>
</feature>
<feature type="strand" evidence="4">
    <location>
        <begin position="258"/>
        <end position="260"/>
    </location>
</feature>
<feature type="strand" evidence="4">
    <location>
        <begin position="262"/>
        <end position="268"/>
    </location>
</feature>
<feature type="strand" evidence="4">
    <location>
        <begin position="275"/>
        <end position="277"/>
    </location>
</feature>
<feature type="strand" evidence="4">
    <location>
        <begin position="280"/>
        <end position="283"/>
    </location>
</feature>
<feature type="helix" evidence="4">
    <location>
        <begin position="285"/>
        <end position="293"/>
    </location>
</feature>
<feature type="helix" evidence="4">
    <location>
        <begin position="301"/>
        <end position="310"/>
    </location>
</feature>
<feature type="helix" evidence="4">
    <location>
        <begin position="313"/>
        <end position="327"/>
    </location>
</feature>
<feature type="turn" evidence="4">
    <location>
        <begin position="329"/>
        <end position="331"/>
    </location>
</feature>
<feature type="helix" evidence="4">
    <location>
        <begin position="334"/>
        <end position="336"/>
    </location>
</feature>
<feature type="strand" evidence="4">
    <location>
        <begin position="344"/>
        <end position="347"/>
    </location>
</feature>
<feature type="helix" evidence="4">
    <location>
        <begin position="351"/>
        <end position="356"/>
    </location>
</feature>
<feature type="strand" evidence="4">
    <location>
        <begin position="365"/>
        <end position="370"/>
    </location>
</feature>
<feature type="turn" evidence="4">
    <location>
        <begin position="373"/>
        <end position="377"/>
    </location>
</feature>
<feature type="helix" evidence="4">
    <location>
        <begin position="378"/>
        <end position="381"/>
    </location>
</feature>
<feature type="helix" evidence="4">
    <location>
        <begin position="387"/>
        <end position="397"/>
    </location>
</feature>
<feature type="turn" evidence="4">
    <location>
        <begin position="398"/>
        <end position="400"/>
    </location>
</feature>
<feature type="helix" evidence="4">
    <location>
        <begin position="403"/>
        <end position="412"/>
    </location>
</feature>
<feature type="helix" evidence="4">
    <location>
        <begin position="417"/>
        <end position="419"/>
    </location>
</feature>
<feature type="strand" evidence="4">
    <location>
        <begin position="420"/>
        <end position="422"/>
    </location>
</feature>
<feature type="turn" evidence="4">
    <location>
        <begin position="426"/>
        <end position="429"/>
    </location>
</feature>
<feature type="strand" evidence="4">
    <location>
        <begin position="431"/>
        <end position="434"/>
    </location>
</feature>
<feature type="helix" evidence="4">
    <location>
        <begin position="435"/>
        <end position="446"/>
    </location>
</feature>
<feature type="helix" evidence="4">
    <location>
        <begin position="448"/>
        <end position="457"/>
    </location>
</feature>
<feature type="strand" evidence="4">
    <location>
        <begin position="463"/>
        <end position="468"/>
    </location>
</feature>
<feature type="turn" evidence="4">
    <location>
        <begin position="470"/>
        <end position="474"/>
    </location>
</feature>
<feature type="turn" evidence="4">
    <location>
        <begin position="476"/>
        <end position="478"/>
    </location>
</feature>
<feature type="strand" evidence="4">
    <location>
        <begin position="479"/>
        <end position="481"/>
    </location>
</feature>
<feature type="turn" evidence="4">
    <location>
        <begin position="482"/>
        <end position="485"/>
    </location>
</feature>
<feature type="helix" evidence="4">
    <location>
        <begin position="486"/>
        <end position="490"/>
    </location>
</feature>
<feature type="helix" evidence="4">
    <location>
        <begin position="497"/>
        <end position="510"/>
    </location>
</feature>
<feature type="turn" evidence="4">
    <location>
        <begin position="527"/>
        <end position="529"/>
    </location>
</feature>
<feature type="strand" evidence="4">
    <location>
        <begin position="531"/>
        <end position="535"/>
    </location>
</feature>
<feature type="strand" evidence="4">
    <location>
        <begin position="540"/>
        <end position="545"/>
    </location>
</feature>
<feature type="helix" evidence="4">
    <location>
        <begin position="549"/>
        <end position="557"/>
    </location>
</feature>
<feature type="helix" evidence="4">
    <location>
        <begin position="559"/>
        <end position="561"/>
    </location>
</feature>
<keyword id="KW-0002">3D-structure</keyword>
<keyword id="KW-0903">Direct protein sequencing</keyword>
<keyword id="KW-1015">Disulfide bond</keyword>
<keyword id="KW-0325">Glycoprotein</keyword>
<keyword id="KW-0378">Hydrolase</keyword>
<keyword id="KW-0442">Lipid degradation</keyword>
<keyword id="KW-0443">Lipid metabolism</keyword>
<keyword id="KW-0873">Pyrrolidone carboxylic acid</keyword>
<keyword id="KW-0964">Secreted</keyword>
<keyword id="KW-0732">Signal</keyword>